<gene>
    <name type="primary">fliC</name>
    <name type="synonym">flaF</name>
    <name type="synonym">hag</name>
</gene>
<sequence length="351" mass="36866">MAQVINTNSLSLMAQNNLNKSQSSLGTAIERLSSGLRINSAKDDAAGQAISNRFTANIKGLTQASRNANDGISLAQTTEGALNEVNDNLQNIRRLTVQAQNGSNSTSDLKSIQDEITQRLSEINRISEQTDFNGVKVLSSDQKLTIQVGANDGETTDIDLKKIDAKQLGMDTFDVTTKSAKAGAEIATGTKITVDSDATKQADADVTGLAKGQTLVSGTDADGKSAYFIATKDDATGDVAYTKAKVADDGKVTDSGTDAGVKNPLATLDKALAQVDGLRSSLGAVQNRFDSVINNLNSTVNNLSASQSRIQDADYATEVSNMSRANILQQAGTSVLAQANQSTQNVLSLLR</sequence>
<organism>
    <name type="scientific">Serratia marcescens</name>
    <dbReference type="NCBI Taxonomy" id="615"/>
    <lineage>
        <taxon>Bacteria</taxon>
        <taxon>Pseudomonadati</taxon>
        <taxon>Pseudomonadota</taxon>
        <taxon>Gammaproteobacteria</taxon>
        <taxon>Enterobacterales</taxon>
        <taxon>Yersiniaceae</taxon>
        <taxon>Serratia</taxon>
    </lineage>
</organism>
<feature type="chain" id="PRO_0000182581" description="Flagellin">
    <location>
        <begin position="1"/>
        <end position="351"/>
    </location>
</feature>
<proteinExistence type="inferred from homology"/>
<protein>
    <recommendedName>
        <fullName>Flagellin</fullName>
    </recommendedName>
</protein>
<keyword id="KW-0975">Bacterial flagellum</keyword>
<keyword id="KW-0964">Secreted</keyword>
<name>FLIC_SERMA</name>
<dbReference type="EMBL" id="M27219">
    <property type="protein sequence ID" value="AAA26556.1"/>
    <property type="molecule type" value="Genomic_DNA"/>
</dbReference>
<dbReference type="PIR" id="JU0056">
    <property type="entry name" value="JU0056"/>
</dbReference>
<dbReference type="SMR" id="P13713"/>
<dbReference type="STRING" id="273526.SMDB11_2186"/>
<dbReference type="GO" id="GO:0009288">
    <property type="term" value="C:bacterial-type flagellum"/>
    <property type="evidence" value="ECO:0007669"/>
    <property type="project" value="UniProtKB-SubCell"/>
</dbReference>
<dbReference type="GO" id="GO:0005576">
    <property type="term" value="C:extracellular region"/>
    <property type="evidence" value="ECO:0007669"/>
    <property type="project" value="UniProtKB-SubCell"/>
</dbReference>
<dbReference type="GO" id="GO:0005198">
    <property type="term" value="F:structural molecule activity"/>
    <property type="evidence" value="ECO:0007669"/>
    <property type="project" value="InterPro"/>
</dbReference>
<dbReference type="Gene3D" id="6.10.280.190">
    <property type="match status" value="1"/>
</dbReference>
<dbReference type="Gene3D" id="1.20.1330.10">
    <property type="entry name" value="f41 fragment of flagellin, N-terminal domain"/>
    <property type="match status" value="1"/>
</dbReference>
<dbReference type="Gene3D" id="6.10.10.10">
    <property type="entry name" value="Flagellar export chaperone, C-terminal domain"/>
    <property type="match status" value="1"/>
</dbReference>
<dbReference type="InterPro" id="IPR001492">
    <property type="entry name" value="Flagellin"/>
</dbReference>
<dbReference type="InterPro" id="IPR046358">
    <property type="entry name" value="Flagellin_C"/>
</dbReference>
<dbReference type="InterPro" id="IPR042187">
    <property type="entry name" value="Flagellin_C_sub2"/>
</dbReference>
<dbReference type="InterPro" id="IPR001029">
    <property type="entry name" value="Flagellin_N"/>
</dbReference>
<dbReference type="PANTHER" id="PTHR42792">
    <property type="entry name" value="FLAGELLIN"/>
    <property type="match status" value="1"/>
</dbReference>
<dbReference type="PANTHER" id="PTHR42792:SF2">
    <property type="entry name" value="FLAGELLIN"/>
    <property type="match status" value="1"/>
</dbReference>
<dbReference type="Pfam" id="PF00700">
    <property type="entry name" value="Flagellin_C"/>
    <property type="match status" value="1"/>
</dbReference>
<dbReference type="Pfam" id="PF00669">
    <property type="entry name" value="Flagellin_N"/>
    <property type="match status" value="1"/>
</dbReference>
<dbReference type="PRINTS" id="PR00207">
    <property type="entry name" value="FLAGELLIN"/>
</dbReference>
<dbReference type="SUPFAM" id="SSF64518">
    <property type="entry name" value="Phase 1 flagellin"/>
    <property type="match status" value="1"/>
</dbReference>
<comment type="function">
    <text>Flagellin is the subunit protein which polymerizes to form the filaments of bacterial flagella.</text>
</comment>
<comment type="subcellular location">
    <subcellularLocation>
        <location>Secreted</location>
    </subcellularLocation>
    <subcellularLocation>
        <location>Bacterial flagellum</location>
    </subcellularLocation>
</comment>
<comment type="similarity">
    <text evidence="1">Belongs to the bacterial flagellin family.</text>
</comment>
<accession>P13713</accession>
<reference key="1">
    <citation type="journal article" date="1989" name="Gene">
        <title>Cloning and nucleotide sequence of a flagellin-coding gene (hag) from Serratia marcescens 274.</title>
        <authorList>
            <person name="Harshey R.M."/>
            <person name="Estepa G."/>
            <person name="Yanagi H."/>
        </authorList>
    </citation>
    <scope>NUCLEOTIDE SEQUENCE [GENOMIC DNA]</scope>
    <source>
        <strain>274</strain>
    </source>
</reference>
<evidence type="ECO:0000305" key="1"/>